<comment type="function">
    <text>Required for the acetyl modification of the third sugar (glucose) of the octasaccharide subunit of succinoglycan (EPS I).</text>
</comment>
<comment type="subcellular location">
    <subcellularLocation>
        <location>Cell membrane</location>
        <topology>Multi-pass membrane protein</topology>
    </subcellularLocation>
</comment>
<comment type="similarity">
    <text evidence="2">Belongs to the acyltransferase 3 family.</text>
</comment>
<gene>
    <name type="primary">exoZ</name>
    <name type="ordered locus">RB1066</name>
    <name type="ORF">SMb20943</name>
</gene>
<feature type="chain" id="PRO_0000208071" description="Exopolysaccharide production protein ExoZ">
    <location>
        <begin position="1"/>
        <end position="317"/>
    </location>
</feature>
<feature type="transmembrane region" description="Helical" evidence="1">
    <location>
        <begin position="14"/>
        <end position="34"/>
    </location>
</feature>
<feature type="transmembrane region" description="Helical" evidence="1">
    <location>
        <begin position="53"/>
        <end position="73"/>
    </location>
</feature>
<feature type="transmembrane region" description="Helical" evidence="1">
    <location>
        <begin position="100"/>
        <end position="120"/>
    </location>
</feature>
<feature type="transmembrane region" description="Helical" evidence="1">
    <location>
        <begin position="132"/>
        <end position="152"/>
    </location>
</feature>
<feature type="transmembrane region" description="Helical" evidence="1">
    <location>
        <begin position="185"/>
        <end position="205"/>
    </location>
</feature>
<feature type="transmembrane region" description="Helical" evidence="1">
    <location>
        <begin position="206"/>
        <end position="226"/>
    </location>
</feature>
<feature type="transmembrane region" description="Helical" evidence="1">
    <location>
        <begin position="268"/>
        <end position="288"/>
    </location>
</feature>
<feature type="sequence conflict" description="In Ref. 1; CAA41126." evidence="2" ref="1">
    <original>P</original>
    <variation>A</variation>
    <location>
        <position position="297"/>
    </location>
</feature>
<organism>
    <name type="scientific">Rhizobium meliloti (strain 1021)</name>
    <name type="common">Ensifer meliloti</name>
    <name type="synonym">Sinorhizobium meliloti</name>
    <dbReference type="NCBI Taxonomy" id="266834"/>
    <lineage>
        <taxon>Bacteria</taxon>
        <taxon>Pseudomonadati</taxon>
        <taxon>Pseudomonadota</taxon>
        <taxon>Alphaproteobacteria</taxon>
        <taxon>Hyphomicrobiales</taxon>
        <taxon>Rhizobiaceae</taxon>
        <taxon>Sinorhizobium/Ensifer group</taxon>
        <taxon>Sinorhizobium</taxon>
    </lineage>
</organism>
<protein>
    <recommendedName>
        <fullName>Exopolysaccharide production protein ExoZ</fullName>
    </recommendedName>
</protein>
<reference key="1">
    <citation type="journal article" date="1991" name="Mol. Microbiol.">
        <title>The Rhizobium meliloti exoZl exoB fragment of megaplasmid 2: ExoB functions as a UDP-glucose 4-epimerase and ExoZ shows homology to NodX of Rhizobium leguminosarum biovar viciae strain TOM.</title>
        <authorList>
            <person name="Buendia A.M."/>
            <person name="Enenkel B."/>
            <person name="Koeplin R."/>
            <person name="Niehaus K."/>
            <person name="Arnold W."/>
            <person name="Puehler A."/>
        </authorList>
    </citation>
    <scope>NUCLEOTIDE SEQUENCE [GENOMIC DNA]</scope>
    <source>
        <strain>RCR2011 / SU47</strain>
    </source>
</reference>
<reference key="2">
    <citation type="journal article" date="2001" name="Proc. Natl. Acad. Sci. U.S.A.">
        <title>The complete sequence of the 1,683-kb pSymB megaplasmid from the N2-fixing endosymbiont Sinorhizobium meliloti.</title>
        <authorList>
            <person name="Finan T.M."/>
            <person name="Weidner S."/>
            <person name="Wong K."/>
            <person name="Buhrmester J."/>
            <person name="Chain P."/>
            <person name="Vorhoelter F.J."/>
            <person name="Hernandez-Lucas I."/>
            <person name="Becker A."/>
            <person name="Cowie A."/>
            <person name="Gouzy J."/>
            <person name="Golding B."/>
            <person name="Puehler A."/>
        </authorList>
    </citation>
    <scope>NUCLEOTIDE SEQUENCE [LARGE SCALE GENOMIC DNA]</scope>
    <source>
        <strain>1021</strain>
    </source>
</reference>
<reference key="3">
    <citation type="journal article" date="2001" name="Science">
        <title>The composite genome of the legume symbiont Sinorhizobium meliloti.</title>
        <authorList>
            <person name="Galibert F."/>
            <person name="Finan T.M."/>
            <person name="Long S.R."/>
            <person name="Puehler A."/>
            <person name="Abola P."/>
            <person name="Ampe F."/>
            <person name="Barloy-Hubler F."/>
            <person name="Barnett M.J."/>
            <person name="Becker A."/>
            <person name="Boistard P."/>
            <person name="Bothe G."/>
            <person name="Boutry M."/>
            <person name="Bowser L."/>
            <person name="Buhrmester J."/>
            <person name="Cadieu E."/>
            <person name="Capela D."/>
            <person name="Chain P."/>
            <person name="Cowie A."/>
            <person name="Davis R.W."/>
            <person name="Dreano S."/>
            <person name="Federspiel N.A."/>
            <person name="Fisher R.F."/>
            <person name="Gloux S."/>
            <person name="Godrie T."/>
            <person name="Goffeau A."/>
            <person name="Golding B."/>
            <person name="Gouzy J."/>
            <person name="Gurjal M."/>
            <person name="Hernandez-Lucas I."/>
            <person name="Hong A."/>
            <person name="Huizar L."/>
            <person name="Hyman R.W."/>
            <person name="Jones T."/>
            <person name="Kahn D."/>
            <person name="Kahn M.L."/>
            <person name="Kalman S."/>
            <person name="Keating D.H."/>
            <person name="Kiss E."/>
            <person name="Komp C."/>
            <person name="Lelaure V."/>
            <person name="Masuy D."/>
            <person name="Palm C."/>
            <person name="Peck M.C."/>
            <person name="Pohl T.M."/>
            <person name="Portetelle D."/>
            <person name="Purnelle B."/>
            <person name="Ramsperger U."/>
            <person name="Surzycki R."/>
            <person name="Thebault P."/>
            <person name="Vandenbol M."/>
            <person name="Vorhoelter F.J."/>
            <person name="Weidner S."/>
            <person name="Wells D.H."/>
            <person name="Wong K."/>
            <person name="Yeh K.-C."/>
            <person name="Batut J."/>
        </authorList>
    </citation>
    <scope>NUCLEOTIDE SEQUENCE [LARGE SCALE GENOMIC DNA]</scope>
    <source>
        <strain>1021</strain>
    </source>
</reference>
<reference key="4">
    <citation type="journal article" date="1993" name="Mol. Plant Microbe Interact.">
        <title>Genetic analysis of the Rhizobium meliloti exoYFQ operon: ExoY is homologous to sugar transferases and ExoQ represents a transmembrane protein.</title>
        <authorList>
            <person name="Mueller P."/>
            <person name="Keller M."/>
            <person name="Weng W.M."/>
            <person name="Quandt J."/>
            <person name="Arnold W."/>
            <person name="Puehler A."/>
        </authorList>
    </citation>
    <scope>NUCLEOTIDE SEQUENCE [GENOMIC DNA] OF 1-45</scope>
    <source>
        <strain>RCR2011 / SU47</strain>
    </source>
</reference>
<name>EXOZ_RHIME</name>
<sequence length="317" mass="33821">MLFHAAEKTGHHFTIGAAGVDVFFVISGFIMWVISDRRSVTPVEFIADRARRIVPVYWLATGVMVAGALAGLFPNLVLTLEHVLASLFFVPARSPSSGEIWPVLVQGWTLNFEMLFYAVFAGSLFMPRNWRLPVVSGLFLALVIAGRVVAFDDAVMLTYTRPVILEFVAGMIIGEFWLKGRVPPLAVGSALFACSLGGFALIGVLGLPFDELTTGPLAVLLVIGVLSLEANGCVRALSLPGLLGDASYSIYLWHTFAISVVAKAGLAIGLGAPATMFAAVLSGTLIGIAAYMMLERPLLRRGRARRVTAGLAGRAAE</sequence>
<geneLocation type="plasmid">
    <name>pSymB</name>
    <name>megaplasmid 2</name>
</geneLocation>
<keyword id="KW-1003">Cell membrane</keyword>
<keyword id="KW-0270">Exopolysaccharide synthesis</keyword>
<keyword id="KW-0472">Membrane</keyword>
<keyword id="KW-0536">Nodulation</keyword>
<keyword id="KW-0614">Plasmid</keyword>
<keyword id="KW-1185">Reference proteome</keyword>
<keyword id="KW-0812">Transmembrane</keyword>
<keyword id="KW-1133">Transmembrane helix</keyword>
<dbReference type="EMBL" id="X58126">
    <property type="protein sequence ID" value="CAA41126.1"/>
    <property type="molecule type" value="Genomic_DNA"/>
</dbReference>
<dbReference type="EMBL" id="AL591985">
    <property type="protein sequence ID" value="CAC49466.1"/>
    <property type="molecule type" value="Genomic_DNA"/>
</dbReference>
<dbReference type="EMBL" id="L05588">
    <property type="protein sequence ID" value="AAA26267.1"/>
    <property type="molecule type" value="Genomic_DNA"/>
</dbReference>
<dbReference type="PIR" id="B95975">
    <property type="entry name" value="B95975"/>
</dbReference>
<dbReference type="PIR" id="S16299">
    <property type="entry name" value="S16299"/>
</dbReference>
<dbReference type="RefSeq" id="NP_437606.1">
    <property type="nucleotide sequence ID" value="NC_003078.1"/>
</dbReference>
<dbReference type="EnsemblBacteria" id="CAC49466">
    <property type="protein sequence ID" value="CAC49466"/>
    <property type="gene ID" value="SM_b20943"/>
</dbReference>
<dbReference type="KEGG" id="sme:SM_b20943"/>
<dbReference type="PATRIC" id="fig|266834.11.peg.5995"/>
<dbReference type="eggNOG" id="COG1835">
    <property type="taxonomic scope" value="Bacteria"/>
</dbReference>
<dbReference type="HOGENOM" id="CLU_005679_2_0_5"/>
<dbReference type="OrthoDB" id="9767863at2"/>
<dbReference type="BioCyc" id="MetaCyc:SM_B20943-MONOMER"/>
<dbReference type="Proteomes" id="UP000001976">
    <property type="component" value="Plasmid pSymB"/>
</dbReference>
<dbReference type="GO" id="GO:0005886">
    <property type="term" value="C:plasma membrane"/>
    <property type="evidence" value="ECO:0007669"/>
    <property type="project" value="UniProtKB-SubCell"/>
</dbReference>
<dbReference type="GO" id="GO:0016747">
    <property type="term" value="F:acyltransferase activity, transferring groups other than amino-acyl groups"/>
    <property type="evidence" value="ECO:0007669"/>
    <property type="project" value="InterPro"/>
</dbReference>
<dbReference type="GO" id="GO:0000271">
    <property type="term" value="P:polysaccharide biosynthetic process"/>
    <property type="evidence" value="ECO:0007669"/>
    <property type="project" value="UniProtKB-KW"/>
</dbReference>
<dbReference type="InterPro" id="IPR002656">
    <property type="entry name" value="Acyl_transf_3_dom"/>
</dbReference>
<dbReference type="InterPro" id="IPR050879">
    <property type="entry name" value="Acyltransferase_3"/>
</dbReference>
<dbReference type="PANTHER" id="PTHR23028">
    <property type="entry name" value="ACETYLTRANSFERASE"/>
    <property type="match status" value="1"/>
</dbReference>
<dbReference type="PANTHER" id="PTHR23028:SF131">
    <property type="entry name" value="BLR2367 PROTEIN"/>
    <property type="match status" value="1"/>
</dbReference>
<dbReference type="Pfam" id="PF01757">
    <property type="entry name" value="Acyl_transf_3"/>
    <property type="match status" value="1"/>
</dbReference>
<evidence type="ECO:0000255" key="1"/>
<evidence type="ECO:0000305" key="2"/>
<proteinExistence type="inferred from homology"/>
<accession>P26502</accession>